<proteinExistence type="inferred from homology"/>
<gene>
    <name evidence="1" type="primary">rpsK</name>
    <name type="ordered locus">SPA3283</name>
</gene>
<dbReference type="EMBL" id="CP000026">
    <property type="protein sequence ID" value="AAV79099.1"/>
    <property type="molecule type" value="Genomic_DNA"/>
</dbReference>
<dbReference type="RefSeq" id="WP_001029758.1">
    <property type="nucleotide sequence ID" value="NC_006511.1"/>
</dbReference>
<dbReference type="SMR" id="Q5PK08"/>
<dbReference type="GeneID" id="98390419"/>
<dbReference type="KEGG" id="spt:SPA3283"/>
<dbReference type="HOGENOM" id="CLU_072439_5_0_6"/>
<dbReference type="Proteomes" id="UP000008185">
    <property type="component" value="Chromosome"/>
</dbReference>
<dbReference type="GO" id="GO:1990904">
    <property type="term" value="C:ribonucleoprotein complex"/>
    <property type="evidence" value="ECO:0007669"/>
    <property type="project" value="UniProtKB-KW"/>
</dbReference>
<dbReference type="GO" id="GO:0005840">
    <property type="term" value="C:ribosome"/>
    <property type="evidence" value="ECO:0007669"/>
    <property type="project" value="UniProtKB-KW"/>
</dbReference>
<dbReference type="GO" id="GO:0019843">
    <property type="term" value="F:rRNA binding"/>
    <property type="evidence" value="ECO:0007669"/>
    <property type="project" value="UniProtKB-UniRule"/>
</dbReference>
<dbReference type="GO" id="GO:0003735">
    <property type="term" value="F:structural constituent of ribosome"/>
    <property type="evidence" value="ECO:0007669"/>
    <property type="project" value="InterPro"/>
</dbReference>
<dbReference type="GO" id="GO:0006412">
    <property type="term" value="P:translation"/>
    <property type="evidence" value="ECO:0007669"/>
    <property type="project" value="UniProtKB-UniRule"/>
</dbReference>
<dbReference type="FunFam" id="3.30.420.80:FF:000001">
    <property type="entry name" value="30S ribosomal protein S11"/>
    <property type="match status" value="1"/>
</dbReference>
<dbReference type="Gene3D" id="3.30.420.80">
    <property type="entry name" value="Ribosomal protein S11"/>
    <property type="match status" value="1"/>
</dbReference>
<dbReference type="HAMAP" id="MF_01310">
    <property type="entry name" value="Ribosomal_uS11"/>
    <property type="match status" value="1"/>
</dbReference>
<dbReference type="InterPro" id="IPR001971">
    <property type="entry name" value="Ribosomal_uS11"/>
</dbReference>
<dbReference type="InterPro" id="IPR019981">
    <property type="entry name" value="Ribosomal_uS11_bac-type"/>
</dbReference>
<dbReference type="InterPro" id="IPR018102">
    <property type="entry name" value="Ribosomal_uS11_CS"/>
</dbReference>
<dbReference type="InterPro" id="IPR036967">
    <property type="entry name" value="Ribosomal_uS11_sf"/>
</dbReference>
<dbReference type="NCBIfam" id="NF003698">
    <property type="entry name" value="PRK05309.1"/>
    <property type="match status" value="1"/>
</dbReference>
<dbReference type="NCBIfam" id="TIGR03632">
    <property type="entry name" value="uS11_bact"/>
    <property type="match status" value="1"/>
</dbReference>
<dbReference type="PANTHER" id="PTHR11759">
    <property type="entry name" value="40S RIBOSOMAL PROTEIN S14/30S RIBOSOMAL PROTEIN S11"/>
    <property type="match status" value="1"/>
</dbReference>
<dbReference type="Pfam" id="PF00411">
    <property type="entry name" value="Ribosomal_S11"/>
    <property type="match status" value="1"/>
</dbReference>
<dbReference type="PIRSF" id="PIRSF002131">
    <property type="entry name" value="Ribosomal_S11"/>
    <property type="match status" value="1"/>
</dbReference>
<dbReference type="SUPFAM" id="SSF53137">
    <property type="entry name" value="Translational machinery components"/>
    <property type="match status" value="1"/>
</dbReference>
<dbReference type="PROSITE" id="PS00054">
    <property type="entry name" value="RIBOSOMAL_S11"/>
    <property type="match status" value="1"/>
</dbReference>
<reference key="1">
    <citation type="journal article" date="2004" name="Nat. Genet.">
        <title>Comparison of genome degradation in Paratyphi A and Typhi, human-restricted serovars of Salmonella enterica that cause typhoid.</title>
        <authorList>
            <person name="McClelland M."/>
            <person name="Sanderson K.E."/>
            <person name="Clifton S.W."/>
            <person name="Latreille P."/>
            <person name="Porwollik S."/>
            <person name="Sabo A."/>
            <person name="Meyer R."/>
            <person name="Bieri T."/>
            <person name="Ozersky P."/>
            <person name="McLellan M."/>
            <person name="Harkins C.R."/>
            <person name="Wang C."/>
            <person name="Nguyen C."/>
            <person name="Berghoff A."/>
            <person name="Elliott G."/>
            <person name="Kohlberg S."/>
            <person name="Strong C."/>
            <person name="Du F."/>
            <person name="Carter J."/>
            <person name="Kremizki C."/>
            <person name="Layman D."/>
            <person name="Leonard S."/>
            <person name="Sun H."/>
            <person name="Fulton L."/>
            <person name="Nash W."/>
            <person name="Miner T."/>
            <person name="Minx P."/>
            <person name="Delehaunty K."/>
            <person name="Fronick C."/>
            <person name="Magrini V."/>
            <person name="Nhan M."/>
            <person name="Warren W."/>
            <person name="Florea L."/>
            <person name="Spieth J."/>
            <person name="Wilson R.K."/>
        </authorList>
    </citation>
    <scope>NUCLEOTIDE SEQUENCE [LARGE SCALE GENOMIC DNA]</scope>
    <source>
        <strain>ATCC 9150 / SARB42</strain>
    </source>
</reference>
<evidence type="ECO:0000255" key="1">
    <source>
        <dbReference type="HAMAP-Rule" id="MF_01310"/>
    </source>
</evidence>
<evidence type="ECO:0000305" key="2"/>
<organism>
    <name type="scientific">Salmonella paratyphi A (strain ATCC 9150 / SARB42)</name>
    <dbReference type="NCBI Taxonomy" id="295319"/>
    <lineage>
        <taxon>Bacteria</taxon>
        <taxon>Pseudomonadati</taxon>
        <taxon>Pseudomonadota</taxon>
        <taxon>Gammaproteobacteria</taxon>
        <taxon>Enterobacterales</taxon>
        <taxon>Enterobacteriaceae</taxon>
        <taxon>Salmonella</taxon>
    </lineage>
</organism>
<feature type="chain" id="PRO_0000123211" description="Small ribosomal subunit protein uS11">
    <location>
        <begin position="1"/>
        <end position="129"/>
    </location>
</feature>
<accession>Q5PK08</accession>
<keyword id="KW-0687">Ribonucleoprotein</keyword>
<keyword id="KW-0689">Ribosomal protein</keyword>
<keyword id="KW-0694">RNA-binding</keyword>
<keyword id="KW-0699">rRNA-binding</keyword>
<sequence length="129" mass="13831">MAKAPVRARKRVRKQVSDGVAHIHASFNNTIVTITDRQGNALGWATAGGSGFRGSRKSTPFAAQVAAERCADAVKEYGIKNLEVMVKGPGPGRESTIRALNAAGFRITNITDVTPIPHNGCRPPKKRRV</sequence>
<comment type="function">
    <text evidence="1">Located on the platform of the 30S subunit, it bridges several disparate RNA helices of the 16S rRNA. Forms part of the Shine-Dalgarno cleft in the 70S ribosome.</text>
</comment>
<comment type="subunit">
    <text evidence="1">Part of the 30S ribosomal subunit. Interacts with proteins S7 and S18. Binds to IF-3.</text>
</comment>
<comment type="similarity">
    <text evidence="1">Belongs to the universal ribosomal protein uS11 family.</text>
</comment>
<name>RS11_SALPA</name>
<protein>
    <recommendedName>
        <fullName evidence="1">Small ribosomal subunit protein uS11</fullName>
    </recommendedName>
    <alternativeName>
        <fullName evidence="2">30S ribosomal protein S11</fullName>
    </alternativeName>
</protein>